<evidence type="ECO:0000250" key="1"/>
<evidence type="ECO:0000255" key="2"/>
<evidence type="ECO:0000255" key="3">
    <source>
        <dbReference type="PROSITE-ProRule" id="PRU10039"/>
    </source>
</evidence>
<evidence type="ECO:0000269" key="4">
    <source>
    </source>
</evidence>
<evidence type="ECO:0000303" key="5">
    <source>
    </source>
</evidence>
<evidence type="ECO:0000303" key="6">
    <source>
    </source>
</evidence>
<evidence type="ECO:0000305" key="7"/>
<gene>
    <name type="primary">CES5A</name>
    <name type="synonym">CES7</name>
</gene>
<feature type="signal peptide" evidence="2">
    <location>
        <begin position="1"/>
        <end position="20"/>
    </location>
</feature>
<feature type="chain" id="PRO_0000308591" description="Carboxylesterase 5A">
    <location>
        <begin position="21"/>
        <end position="575"/>
    </location>
</feature>
<feature type="active site" description="Acyl-ester intermediate" evidence="3">
    <location>
        <position position="226"/>
    </location>
</feature>
<feature type="active site" description="Charge relay system" evidence="1">
    <location>
        <position position="345"/>
    </location>
</feature>
<feature type="active site" description="Charge relay system" evidence="1">
    <location>
        <position position="454"/>
    </location>
</feature>
<feature type="glycosylation site" description="N-linked (GlcNAc...) asparagine" evidence="2">
    <location>
        <position position="281"/>
    </location>
</feature>
<feature type="glycosylation site" description="N-linked (GlcNAc...) asparagine" evidence="2">
    <location>
        <position position="363"/>
    </location>
</feature>
<feature type="glycosylation site" description="N-linked (GlcNAc...) asparagine" evidence="2">
    <location>
        <position position="513"/>
    </location>
</feature>
<feature type="glycosylation site" description="N-linked (GlcNAc...) asparagine" evidence="2">
    <location>
        <position position="524"/>
    </location>
</feature>
<feature type="disulfide bond" evidence="1">
    <location>
        <begin position="94"/>
        <end position="121"/>
    </location>
</feature>
<feature type="splice variant" id="VSP_029005" description="In isoform 3." evidence="5">
    <location>
        <begin position="1"/>
        <end position="106"/>
    </location>
</feature>
<feature type="splice variant" id="VSP_043296" description="In isoform 4." evidence="5">
    <original>MSGNWVHPGQILIWAIWVLAAPTK</original>
    <variation>MAVLVCPASCHGLKEFRIRRGMWRLCLVYYFYPASSTLYVLRIDVLNYTSKDE</variation>
    <location>
        <begin position="1"/>
        <end position="24"/>
    </location>
</feature>
<feature type="splice variant" id="VSP_029006" description="In isoform 2." evidence="5 6">
    <location>
        <begin position="425"/>
        <end position="474"/>
    </location>
</feature>
<feature type="sequence variant" id="VAR_036836" description="In dbSNP:rs2397965.">
    <original>R</original>
    <variation>Q</variation>
    <location>
        <position position="71"/>
    </location>
</feature>
<feature type="sequence variant" id="VAR_036837" description="In dbSNP:rs11076126.">
    <original>E</original>
    <variation>K</variation>
    <location>
        <position position="261"/>
    </location>
</feature>
<feature type="sequence variant" id="VAR_036838" description="In dbSNP:rs11860946.">
    <original>H</original>
    <variation>Q</variation>
    <location>
        <position position="344"/>
    </location>
</feature>
<feature type="sequence variant" id="VAR_036839" description="In dbSNP:rs16955812.">
    <original>G</original>
    <variation>R</variation>
    <location>
        <position position="499"/>
    </location>
</feature>
<feature type="sequence variant" id="VAR_036840" description="In dbSNP:rs11860456." evidence="4">
    <original>D</original>
    <variation>E</variation>
    <location>
        <position position="537"/>
    </location>
</feature>
<feature type="sequence conflict" description="In Ref. 2; BAC03565." evidence="7" ref="2">
    <original>N</original>
    <variation>S</variation>
    <location>
        <position position="343"/>
    </location>
</feature>
<accession>Q6NT32</accession>
<accession>B7Z252</accession>
<accession>B7ZLB6</accession>
<accession>Q8NBC8</accession>
<accession>Q96DN9</accession>
<protein>
    <recommendedName>
        <fullName>Carboxylesterase 5A</fullName>
        <ecNumber>3.1.1.1</ecNumber>
    </recommendedName>
    <alternativeName>
        <fullName>Carboxylesterase-like urinary excreted protein homolog</fullName>
        <shortName>Cauxin</shortName>
    </alternativeName>
</protein>
<dbReference type="EC" id="3.1.1.1"/>
<dbReference type="EMBL" id="AY907669">
    <property type="protein sequence ID" value="AAX86044.1"/>
    <property type="molecule type" value="mRNA"/>
</dbReference>
<dbReference type="EMBL" id="AK056109">
    <property type="protein sequence ID" value="BAB71094.1"/>
    <property type="molecule type" value="mRNA"/>
</dbReference>
<dbReference type="EMBL" id="AK090997">
    <property type="protein sequence ID" value="BAC03565.1"/>
    <property type="molecule type" value="mRNA"/>
</dbReference>
<dbReference type="EMBL" id="AK294334">
    <property type="protein sequence ID" value="BAH11738.1"/>
    <property type="molecule type" value="mRNA"/>
</dbReference>
<dbReference type="EMBL" id="AC007335">
    <property type="status" value="NOT_ANNOTATED_CDS"/>
    <property type="molecule type" value="Genomic_DNA"/>
</dbReference>
<dbReference type="EMBL" id="AC147362">
    <property type="status" value="NOT_ANNOTATED_CDS"/>
    <property type="molecule type" value="Genomic_DNA"/>
</dbReference>
<dbReference type="EMBL" id="BC069501">
    <property type="protein sequence ID" value="AAH69501.1"/>
    <property type="molecule type" value="mRNA"/>
</dbReference>
<dbReference type="EMBL" id="BC069548">
    <property type="protein sequence ID" value="AAH69548.1"/>
    <property type="molecule type" value="mRNA"/>
</dbReference>
<dbReference type="EMBL" id="BC117126">
    <property type="protein sequence ID" value="AAI17127.1"/>
    <property type="molecule type" value="mRNA"/>
</dbReference>
<dbReference type="EMBL" id="BC143692">
    <property type="protein sequence ID" value="AAI43693.1"/>
    <property type="molecule type" value="mRNA"/>
</dbReference>
<dbReference type="CCDS" id="CCDS10755.1">
    <molecule id="Q6NT32-2"/>
</dbReference>
<dbReference type="CCDS" id="CCDS45490.1">
    <molecule id="Q6NT32-1"/>
</dbReference>
<dbReference type="CCDS" id="CCDS54012.1">
    <molecule id="Q6NT32-4"/>
</dbReference>
<dbReference type="RefSeq" id="NP_001137157.1">
    <molecule id="Q6NT32-1"/>
    <property type="nucleotide sequence ID" value="NM_001143685.2"/>
</dbReference>
<dbReference type="RefSeq" id="NP_001177087.1">
    <molecule id="Q6NT32-4"/>
    <property type="nucleotide sequence ID" value="NM_001190158.1"/>
</dbReference>
<dbReference type="RefSeq" id="NP_659461.1">
    <molecule id="Q6NT32-2"/>
    <property type="nucleotide sequence ID" value="NM_145024.3"/>
</dbReference>
<dbReference type="SMR" id="Q6NT32"/>
<dbReference type="FunCoup" id="Q6NT32">
    <property type="interactions" value="13"/>
</dbReference>
<dbReference type="STRING" id="9606.ENSP00000428864"/>
<dbReference type="ESTHER" id="human-CES5A">
    <property type="family name" value="Carb_B_Chordata"/>
</dbReference>
<dbReference type="MEROPS" id="S09.960"/>
<dbReference type="GlyCosmos" id="Q6NT32">
    <property type="glycosylation" value="4 sites, No reported glycans"/>
</dbReference>
<dbReference type="GlyGen" id="Q6NT32">
    <property type="glycosylation" value="4 sites"/>
</dbReference>
<dbReference type="iPTMnet" id="Q6NT32"/>
<dbReference type="PhosphoSitePlus" id="Q6NT32"/>
<dbReference type="BioMuta" id="CES5A"/>
<dbReference type="DMDM" id="74758113"/>
<dbReference type="MassIVE" id="Q6NT32"/>
<dbReference type="PaxDb" id="9606-ENSP00000428864"/>
<dbReference type="PeptideAtlas" id="Q6NT32"/>
<dbReference type="ProteomicsDB" id="66653">
    <molecule id="Q6NT32-1"/>
</dbReference>
<dbReference type="ProteomicsDB" id="66654">
    <molecule id="Q6NT32-2"/>
</dbReference>
<dbReference type="ProteomicsDB" id="66655">
    <molecule id="Q6NT32-3"/>
</dbReference>
<dbReference type="ProteomicsDB" id="66656">
    <molecule id="Q6NT32-4"/>
</dbReference>
<dbReference type="Antibodypedia" id="28532">
    <property type="antibodies" value="116 antibodies from 21 providers"/>
</dbReference>
<dbReference type="DNASU" id="221223"/>
<dbReference type="Ensembl" id="ENST00000290567.14">
    <molecule id="Q6NT32-1"/>
    <property type="protein sequence ID" value="ENSP00000290567.9"/>
    <property type="gene ID" value="ENSG00000159398.16"/>
</dbReference>
<dbReference type="Ensembl" id="ENST00000319165.13">
    <molecule id="Q6NT32-2"/>
    <property type="protein sequence ID" value="ENSP00000324271.9"/>
    <property type="gene ID" value="ENSG00000159398.16"/>
</dbReference>
<dbReference type="Ensembl" id="ENST00000518005.5">
    <molecule id="Q6NT32-3"/>
    <property type="protein sequence ID" value="ENSP00000428571.1"/>
    <property type="gene ID" value="ENSG00000159398.16"/>
</dbReference>
<dbReference type="Ensembl" id="ENST00000521992.5">
    <molecule id="Q6NT32-4"/>
    <property type="protein sequence ID" value="ENSP00000428864.1"/>
    <property type="gene ID" value="ENSG00000159398.16"/>
</dbReference>
<dbReference type="GeneID" id="221223"/>
<dbReference type="KEGG" id="hsa:221223"/>
<dbReference type="MANE-Select" id="ENST00000290567.14">
    <property type="protein sequence ID" value="ENSP00000290567.9"/>
    <property type="RefSeq nucleotide sequence ID" value="NM_001143685.2"/>
    <property type="RefSeq protein sequence ID" value="NP_001137157.1"/>
</dbReference>
<dbReference type="UCSC" id="uc002eip.3">
    <molecule id="Q6NT32-1"/>
    <property type="organism name" value="human"/>
</dbReference>
<dbReference type="AGR" id="HGNC:26459"/>
<dbReference type="CTD" id="221223"/>
<dbReference type="GeneCards" id="CES5A"/>
<dbReference type="HGNC" id="HGNC:26459">
    <property type="gene designation" value="CES5A"/>
</dbReference>
<dbReference type="HPA" id="ENSG00000159398">
    <property type="expression patterns" value="Tissue enriched (epididymis)"/>
</dbReference>
<dbReference type="MIM" id="618678">
    <property type="type" value="gene"/>
</dbReference>
<dbReference type="neXtProt" id="NX_Q6NT32"/>
<dbReference type="OpenTargets" id="ENSG00000159398"/>
<dbReference type="PharmGKB" id="PA142672130"/>
<dbReference type="VEuPathDB" id="HostDB:ENSG00000159398"/>
<dbReference type="eggNOG" id="KOG1516">
    <property type="taxonomic scope" value="Eukaryota"/>
</dbReference>
<dbReference type="GeneTree" id="ENSGT00940000161596"/>
<dbReference type="HOGENOM" id="CLU_006586_13_0_1"/>
<dbReference type="InParanoid" id="Q6NT32"/>
<dbReference type="OMA" id="HWIQQSP"/>
<dbReference type="OrthoDB" id="3200163at2759"/>
<dbReference type="PAN-GO" id="Q6NT32">
    <property type="GO annotations" value="0 GO annotations based on evolutionary models"/>
</dbReference>
<dbReference type="PhylomeDB" id="Q6NT32"/>
<dbReference type="TreeFam" id="TF315470"/>
<dbReference type="PathwayCommons" id="Q6NT32"/>
<dbReference type="BioGRID-ORCS" id="221223">
    <property type="hits" value="9 hits in 1142 CRISPR screens"/>
</dbReference>
<dbReference type="ChiTaRS" id="CES5A">
    <property type="organism name" value="human"/>
</dbReference>
<dbReference type="GenomeRNAi" id="221223"/>
<dbReference type="Pharos" id="Q6NT32">
    <property type="development level" value="Tbio"/>
</dbReference>
<dbReference type="PRO" id="PR:Q6NT32"/>
<dbReference type="Proteomes" id="UP000005640">
    <property type="component" value="Chromosome 16"/>
</dbReference>
<dbReference type="RNAct" id="Q6NT32">
    <property type="molecule type" value="protein"/>
</dbReference>
<dbReference type="Bgee" id="ENSG00000159398">
    <property type="expression patterns" value="Expressed in primordial germ cell in gonad and 43 other cell types or tissues"/>
</dbReference>
<dbReference type="ExpressionAtlas" id="Q6NT32">
    <property type="expression patterns" value="baseline and differential"/>
</dbReference>
<dbReference type="GO" id="GO:0005576">
    <property type="term" value="C:extracellular region"/>
    <property type="evidence" value="ECO:0007669"/>
    <property type="project" value="UniProtKB-SubCell"/>
</dbReference>
<dbReference type="GO" id="GO:0106435">
    <property type="term" value="F:carboxylesterase activity"/>
    <property type="evidence" value="ECO:0007669"/>
    <property type="project" value="UniProtKB-EC"/>
</dbReference>
<dbReference type="CDD" id="cd00312">
    <property type="entry name" value="Esterase_lipase"/>
    <property type="match status" value="1"/>
</dbReference>
<dbReference type="FunFam" id="3.40.50.1820:FF:000011">
    <property type="entry name" value="Carboxylic ester hydrolase"/>
    <property type="match status" value="1"/>
</dbReference>
<dbReference type="Gene3D" id="3.40.50.1820">
    <property type="entry name" value="alpha/beta hydrolase"/>
    <property type="match status" value="1"/>
</dbReference>
<dbReference type="InterPro" id="IPR029058">
    <property type="entry name" value="AB_hydrolase_fold"/>
</dbReference>
<dbReference type="InterPro" id="IPR002018">
    <property type="entry name" value="CarbesteraseB"/>
</dbReference>
<dbReference type="InterPro" id="IPR019826">
    <property type="entry name" value="Carboxylesterase_B_AS"/>
</dbReference>
<dbReference type="InterPro" id="IPR019819">
    <property type="entry name" value="Carboxylesterase_B_CS"/>
</dbReference>
<dbReference type="InterPro" id="IPR050309">
    <property type="entry name" value="Type-B_Carboxylest/Lipase"/>
</dbReference>
<dbReference type="PANTHER" id="PTHR11559">
    <property type="entry name" value="CARBOXYLESTERASE"/>
    <property type="match status" value="1"/>
</dbReference>
<dbReference type="Pfam" id="PF00135">
    <property type="entry name" value="COesterase"/>
    <property type="match status" value="1"/>
</dbReference>
<dbReference type="SUPFAM" id="SSF53474">
    <property type="entry name" value="alpha/beta-Hydrolases"/>
    <property type="match status" value="1"/>
</dbReference>
<dbReference type="PROSITE" id="PS00122">
    <property type="entry name" value="CARBOXYLESTERASE_B_1"/>
    <property type="match status" value="1"/>
</dbReference>
<dbReference type="PROSITE" id="PS00941">
    <property type="entry name" value="CARBOXYLESTERASE_B_2"/>
    <property type="match status" value="1"/>
</dbReference>
<name>EST5A_HUMAN</name>
<reference key="1">
    <citation type="submission" date="2005-01" db="EMBL/GenBank/DDBJ databases">
        <authorList>
            <person name="Liu Q."/>
            <person name="Hamil K.G."/>
            <person name="French F.S."/>
            <person name="Hall S.H."/>
            <person name="Zhang Y.-L."/>
        </authorList>
    </citation>
    <scope>NUCLEOTIDE SEQUENCE [MRNA] (ISOFORM 1)</scope>
</reference>
<reference key="2">
    <citation type="journal article" date="2004" name="Nat. Genet.">
        <title>Complete sequencing and characterization of 21,243 full-length human cDNAs.</title>
        <authorList>
            <person name="Ota T."/>
            <person name="Suzuki Y."/>
            <person name="Nishikawa T."/>
            <person name="Otsuki T."/>
            <person name="Sugiyama T."/>
            <person name="Irie R."/>
            <person name="Wakamatsu A."/>
            <person name="Hayashi K."/>
            <person name="Sato H."/>
            <person name="Nagai K."/>
            <person name="Kimura K."/>
            <person name="Makita H."/>
            <person name="Sekine M."/>
            <person name="Obayashi M."/>
            <person name="Nishi T."/>
            <person name="Shibahara T."/>
            <person name="Tanaka T."/>
            <person name="Ishii S."/>
            <person name="Yamamoto J."/>
            <person name="Saito K."/>
            <person name="Kawai Y."/>
            <person name="Isono Y."/>
            <person name="Nakamura Y."/>
            <person name="Nagahari K."/>
            <person name="Murakami K."/>
            <person name="Yasuda T."/>
            <person name="Iwayanagi T."/>
            <person name="Wagatsuma M."/>
            <person name="Shiratori A."/>
            <person name="Sudo H."/>
            <person name="Hosoiri T."/>
            <person name="Kaku Y."/>
            <person name="Kodaira H."/>
            <person name="Kondo H."/>
            <person name="Sugawara M."/>
            <person name="Takahashi M."/>
            <person name="Kanda K."/>
            <person name="Yokoi T."/>
            <person name="Furuya T."/>
            <person name="Kikkawa E."/>
            <person name="Omura Y."/>
            <person name="Abe K."/>
            <person name="Kamihara K."/>
            <person name="Katsuta N."/>
            <person name="Sato K."/>
            <person name="Tanikawa M."/>
            <person name="Yamazaki M."/>
            <person name="Ninomiya K."/>
            <person name="Ishibashi T."/>
            <person name="Yamashita H."/>
            <person name="Murakawa K."/>
            <person name="Fujimori K."/>
            <person name="Tanai H."/>
            <person name="Kimata M."/>
            <person name="Watanabe M."/>
            <person name="Hiraoka S."/>
            <person name="Chiba Y."/>
            <person name="Ishida S."/>
            <person name="Ono Y."/>
            <person name="Takiguchi S."/>
            <person name="Watanabe S."/>
            <person name="Yosida M."/>
            <person name="Hotuta T."/>
            <person name="Kusano J."/>
            <person name="Kanehori K."/>
            <person name="Takahashi-Fujii A."/>
            <person name="Hara H."/>
            <person name="Tanase T.-O."/>
            <person name="Nomura Y."/>
            <person name="Togiya S."/>
            <person name="Komai F."/>
            <person name="Hara R."/>
            <person name="Takeuchi K."/>
            <person name="Arita M."/>
            <person name="Imose N."/>
            <person name="Musashino K."/>
            <person name="Yuuki H."/>
            <person name="Oshima A."/>
            <person name="Sasaki N."/>
            <person name="Aotsuka S."/>
            <person name="Yoshikawa Y."/>
            <person name="Matsunawa H."/>
            <person name="Ichihara T."/>
            <person name="Shiohata N."/>
            <person name="Sano S."/>
            <person name="Moriya S."/>
            <person name="Momiyama H."/>
            <person name="Satoh N."/>
            <person name="Takami S."/>
            <person name="Terashima Y."/>
            <person name="Suzuki O."/>
            <person name="Nakagawa S."/>
            <person name="Senoh A."/>
            <person name="Mizoguchi H."/>
            <person name="Goto Y."/>
            <person name="Shimizu F."/>
            <person name="Wakebe H."/>
            <person name="Hishigaki H."/>
            <person name="Watanabe T."/>
            <person name="Sugiyama A."/>
            <person name="Takemoto M."/>
            <person name="Kawakami B."/>
            <person name="Yamazaki M."/>
            <person name="Watanabe K."/>
            <person name="Kumagai A."/>
            <person name="Itakura S."/>
            <person name="Fukuzumi Y."/>
            <person name="Fujimori Y."/>
            <person name="Komiyama M."/>
            <person name="Tashiro H."/>
            <person name="Tanigami A."/>
            <person name="Fujiwara T."/>
            <person name="Ono T."/>
            <person name="Yamada K."/>
            <person name="Fujii Y."/>
            <person name="Ozaki K."/>
            <person name="Hirao M."/>
            <person name="Ohmori Y."/>
            <person name="Kawabata A."/>
            <person name="Hikiji T."/>
            <person name="Kobatake N."/>
            <person name="Inagaki H."/>
            <person name="Ikema Y."/>
            <person name="Okamoto S."/>
            <person name="Okitani R."/>
            <person name="Kawakami T."/>
            <person name="Noguchi S."/>
            <person name="Itoh T."/>
            <person name="Shigeta K."/>
            <person name="Senba T."/>
            <person name="Matsumura K."/>
            <person name="Nakajima Y."/>
            <person name="Mizuno T."/>
            <person name="Morinaga M."/>
            <person name="Sasaki M."/>
            <person name="Togashi T."/>
            <person name="Oyama M."/>
            <person name="Hata H."/>
            <person name="Watanabe M."/>
            <person name="Komatsu T."/>
            <person name="Mizushima-Sugano J."/>
            <person name="Satoh T."/>
            <person name="Shirai Y."/>
            <person name="Takahashi Y."/>
            <person name="Nakagawa K."/>
            <person name="Okumura K."/>
            <person name="Nagase T."/>
            <person name="Nomura N."/>
            <person name="Kikuchi H."/>
            <person name="Masuho Y."/>
            <person name="Yamashita R."/>
            <person name="Nakai K."/>
            <person name="Yada T."/>
            <person name="Nakamura Y."/>
            <person name="Ohara O."/>
            <person name="Isogai T."/>
            <person name="Sugano S."/>
        </authorList>
    </citation>
    <scope>NUCLEOTIDE SEQUENCE [LARGE SCALE MRNA] (ISOFORMS 2; 3 AND 4)</scope>
    <scope>VARIANT GLU-537</scope>
    <source>
        <tissue>Amygdala</tissue>
        <tissue>Brain</tissue>
    </source>
</reference>
<reference key="3">
    <citation type="journal article" date="2004" name="Nature">
        <title>The sequence and analysis of duplication-rich human chromosome 16.</title>
        <authorList>
            <person name="Martin J."/>
            <person name="Han C."/>
            <person name="Gordon L.A."/>
            <person name="Terry A."/>
            <person name="Prabhakar S."/>
            <person name="She X."/>
            <person name="Xie G."/>
            <person name="Hellsten U."/>
            <person name="Chan Y.M."/>
            <person name="Altherr M."/>
            <person name="Couronne O."/>
            <person name="Aerts A."/>
            <person name="Bajorek E."/>
            <person name="Black S."/>
            <person name="Blumer H."/>
            <person name="Branscomb E."/>
            <person name="Brown N.C."/>
            <person name="Bruno W.J."/>
            <person name="Buckingham J.M."/>
            <person name="Callen D.F."/>
            <person name="Campbell C.S."/>
            <person name="Campbell M.L."/>
            <person name="Campbell E.W."/>
            <person name="Caoile C."/>
            <person name="Challacombe J.F."/>
            <person name="Chasteen L.A."/>
            <person name="Chertkov O."/>
            <person name="Chi H.C."/>
            <person name="Christensen M."/>
            <person name="Clark L.M."/>
            <person name="Cohn J.D."/>
            <person name="Denys M."/>
            <person name="Detter J.C."/>
            <person name="Dickson M."/>
            <person name="Dimitrijevic-Bussod M."/>
            <person name="Escobar J."/>
            <person name="Fawcett J.J."/>
            <person name="Flowers D."/>
            <person name="Fotopulos D."/>
            <person name="Glavina T."/>
            <person name="Gomez M."/>
            <person name="Gonzales E."/>
            <person name="Goodstein D."/>
            <person name="Goodwin L.A."/>
            <person name="Grady D.L."/>
            <person name="Grigoriev I."/>
            <person name="Groza M."/>
            <person name="Hammon N."/>
            <person name="Hawkins T."/>
            <person name="Haydu L."/>
            <person name="Hildebrand C.E."/>
            <person name="Huang W."/>
            <person name="Israni S."/>
            <person name="Jett J."/>
            <person name="Jewett P.B."/>
            <person name="Kadner K."/>
            <person name="Kimball H."/>
            <person name="Kobayashi A."/>
            <person name="Krawczyk M.-C."/>
            <person name="Leyba T."/>
            <person name="Longmire J.L."/>
            <person name="Lopez F."/>
            <person name="Lou Y."/>
            <person name="Lowry S."/>
            <person name="Ludeman T."/>
            <person name="Manohar C.F."/>
            <person name="Mark G.A."/>
            <person name="McMurray K.L."/>
            <person name="Meincke L.J."/>
            <person name="Morgan J."/>
            <person name="Moyzis R.K."/>
            <person name="Mundt M.O."/>
            <person name="Munk A.C."/>
            <person name="Nandkeshwar R.D."/>
            <person name="Pitluck S."/>
            <person name="Pollard M."/>
            <person name="Predki P."/>
            <person name="Parson-Quintana B."/>
            <person name="Ramirez L."/>
            <person name="Rash S."/>
            <person name="Retterer J."/>
            <person name="Ricke D.O."/>
            <person name="Robinson D.L."/>
            <person name="Rodriguez A."/>
            <person name="Salamov A."/>
            <person name="Saunders E.H."/>
            <person name="Scott D."/>
            <person name="Shough T."/>
            <person name="Stallings R.L."/>
            <person name="Stalvey M."/>
            <person name="Sutherland R.D."/>
            <person name="Tapia R."/>
            <person name="Tesmer J.G."/>
            <person name="Thayer N."/>
            <person name="Thompson L.S."/>
            <person name="Tice H."/>
            <person name="Torney D.C."/>
            <person name="Tran-Gyamfi M."/>
            <person name="Tsai M."/>
            <person name="Ulanovsky L.E."/>
            <person name="Ustaszewska A."/>
            <person name="Vo N."/>
            <person name="White P.S."/>
            <person name="Williams A.L."/>
            <person name="Wills P.L."/>
            <person name="Wu J.-R."/>
            <person name="Wu K."/>
            <person name="Yang J."/>
            <person name="DeJong P."/>
            <person name="Bruce D."/>
            <person name="Doggett N.A."/>
            <person name="Deaven L."/>
            <person name="Schmutz J."/>
            <person name="Grimwood J."/>
            <person name="Richardson P."/>
            <person name="Rokhsar D.S."/>
            <person name="Eichler E.E."/>
            <person name="Gilna P."/>
            <person name="Lucas S.M."/>
            <person name="Myers R.M."/>
            <person name="Rubin E.M."/>
            <person name="Pennacchio L.A."/>
        </authorList>
    </citation>
    <scope>NUCLEOTIDE SEQUENCE [LARGE SCALE GENOMIC DNA]</scope>
</reference>
<reference key="4">
    <citation type="journal article" date="2004" name="Genome Res.">
        <title>The status, quality, and expansion of the NIH full-length cDNA project: the Mammalian Gene Collection (MGC).</title>
        <authorList>
            <consortium name="The MGC Project Team"/>
        </authorList>
    </citation>
    <scope>NUCLEOTIDE SEQUENCE [LARGE SCALE MRNA] (ISOFORMS 1 AND 2)</scope>
    <source>
        <tissue>Brain</tissue>
    </source>
</reference>
<comment type="function">
    <text evidence="1">Involved in the detoxification of xenobiotics and in the activation of ester and amide prodrugs.</text>
</comment>
<comment type="catalytic activity">
    <reaction evidence="3">
        <text>a carboxylic ester + H2O = an alcohol + a carboxylate + H(+)</text>
        <dbReference type="Rhea" id="RHEA:21164"/>
        <dbReference type="ChEBI" id="CHEBI:15377"/>
        <dbReference type="ChEBI" id="CHEBI:15378"/>
        <dbReference type="ChEBI" id="CHEBI:29067"/>
        <dbReference type="ChEBI" id="CHEBI:30879"/>
        <dbReference type="ChEBI" id="CHEBI:33308"/>
        <dbReference type="EC" id="3.1.1.1"/>
    </reaction>
</comment>
<comment type="subcellular location">
    <subcellularLocation>
        <location evidence="1">Secreted</location>
    </subcellularLocation>
</comment>
<comment type="alternative products">
    <event type="alternative splicing"/>
    <isoform>
        <id>Q6NT32-1</id>
        <name>1</name>
        <sequence type="displayed"/>
    </isoform>
    <isoform>
        <id>Q6NT32-2</id>
        <name>2</name>
        <sequence type="described" ref="VSP_029006"/>
    </isoform>
    <isoform>
        <id>Q6NT32-3</id>
        <name>3</name>
        <sequence type="described" ref="VSP_029005"/>
    </isoform>
    <isoform>
        <id>Q6NT32-4</id>
        <name>4</name>
        <sequence type="described" ref="VSP_043296"/>
    </isoform>
</comment>
<comment type="PTM">
    <text evidence="1">N-glycosylated.</text>
</comment>
<comment type="similarity">
    <text evidence="7">Belongs to the type-B carboxylesterase/lipase family.</text>
</comment>
<comment type="caution">
    <text evidence="7">Was termed (Ref.1) CES5.</text>
</comment>
<sequence>MSGNWVHPGQILIWAIWVLAAPTKGPSAEGPQRNTRLGWIQGKQVTVLGSPVPVNVFLGVPFAAPPLGSLRFTNPQPASPWDNLREATSYPNLCLQNSEWLLLDQHMLKVHYPKFGVSEDCLYLNIYAPAHADTGSKLPVLVWFPGGAFKTGSASIFDGSALAAYEDVLVVVVQYRLGIFGFFTTWDQHAPGNWAFKDQVAALSWVQKNIEFFGGDPSSVTIFGESAGAISVSSLILSPMAKGLFHKAIMESGVAIIPYLEAHDYEKSEDLQVVAHFCGNNASDSEALLRCLRTKPSKELLTLSQKTKSFTRVVDGAFFPNEPLDLLSQKAFKAIPSIIGVNNHECGFLLPMKEAPEILSGSNKSLALHLIQNILHIPPQYLHLVANEYFHDKHSLTEIRDSLLDLLGDVFFVVPALITARYHRDAGAPVYFYEFRHRPQCFEDTKPAFVKADHADEVRFVFGGAFLKGDIVMFEGATEEEKLLSRKMMKYWATFARTGNPNGNDLSLWPAYNLTEQYLQLDLNMSLGQRLKEPRVDFWTSTIPLILSASDMLHSPLSSLTFLSLLQPFFFFCAP</sequence>
<organism>
    <name type="scientific">Homo sapiens</name>
    <name type="common">Human</name>
    <dbReference type="NCBI Taxonomy" id="9606"/>
    <lineage>
        <taxon>Eukaryota</taxon>
        <taxon>Metazoa</taxon>
        <taxon>Chordata</taxon>
        <taxon>Craniata</taxon>
        <taxon>Vertebrata</taxon>
        <taxon>Euteleostomi</taxon>
        <taxon>Mammalia</taxon>
        <taxon>Eutheria</taxon>
        <taxon>Euarchontoglires</taxon>
        <taxon>Primates</taxon>
        <taxon>Haplorrhini</taxon>
        <taxon>Catarrhini</taxon>
        <taxon>Hominidae</taxon>
        <taxon>Homo</taxon>
    </lineage>
</organism>
<keyword id="KW-0025">Alternative splicing</keyword>
<keyword id="KW-1015">Disulfide bond</keyword>
<keyword id="KW-0325">Glycoprotein</keyword>
<keyword id="KW-0378">Hydrolase</keyword>
<keyword id="KW-1267">Proteomics identification</keyword>
<keyword id="KW-1185">Reference proteome</keyword>
<keyword id="KW-0964">Secreted</keyword>
<keyword id="KW-0719">Serine esterase</keyword>
<keyword id="KW-0732">Signal</keyword>
<proteinExistence type="evidence at protein level"/>